<name>LEUC_SHESR</name>
<protein>
    <recommendedName>
        <fullName evidence="1">3-isopropylmalate dehydratase large subunit</fullName>
        <ecNumber evidence="1">4.2.1.33</ecNumber>
    </recommendedName>
    <alternativeName>
        <fullName evidence="1">Alpha-IPM isomerase</fullName>
        <shortName evidence="1">IPMI</shortName>
    </alternativeName>
    <alternativeName>
        <fullName evidence="1">Isopropylmalate isomerase</fullName>
    </alternativeName>
</protein>
<accession>Q0HZT2</accession>
<gene>
    <name evidence="1" type="primary">leuC</name>
    <name type="ordered locus">Shewmr7_0370</name>
</gene>
<comment type="function">
    <text evidence="1">Catalyzes the isomerization between 2-isopropylmalate and 3-isopropylmalate, via the formation of 2-isopropylmaleate.</text>
</comment>
<comment type="catalytic activity">
    <reaction evidence="1">
        <text>(2R,3S)-3-isopropylmalate = (2S)-2-isopropylmalate</text>
        <dbReference type="Rhea" id="RHEA:32287"/>
        <dbReference type="ChEBI" id="CHEBI:1178"/>
        <dbReference type="ChEBI" id="CHEBI:35121"/>
        <dbReference type="EC" id="4.2.1.33"/>
    </reaction>
</comment>
<comment type="cofactor">
    <cofactor evidence="1">
        <name>[4Fe-4S] cluster</name>
        <dbReference type="ChEBI" id="CHEBI:49883"/>
    </cofactor>
    <text evidence="1">Binds 1 [4Fe-4S] cluster per subunit.</text>
</comment>
<comment type="pathway">
    <text evidence="1">Amino-acid biosynthesis; L-leucine biosynthesis; L-leucine from 3-methyl-2-oxobutanoate: step 2/4.</text>
</comment>
<comment type="subunit">
    <text evidence="1">Heterodimer of LeuC and LeuD.</text>
</comment>
<comment type="similarity">
    <text evidence="1">Belongs to the aconitase/IPM isomerase family. LeuC type 1 subfamily.</text>
</comment>
<keyword id="KW-0004">4Fe-4S</keyword>
<keyword id="KW-0028">Amino-acid biosynthesis</keyword>
<keyword id="KW-0100">Branched-chain amino acid biosynthesis</keyword>
<keyword id="KW-0408">Iron</keyword>
<keyword id="KW-0411">Iron-sulfur</keyword>
<keyword id="KW-0432">Leucine biosynthesis</keyword>
<keyword id="KW-0456">Lyase</keyword>
<keyword id="KW-0479">Metal-binding</keyword>
<proteinExistence type="inferred from homology"/>
<reference key="1">
    <citation type="submission" date="2006-08" db="EMBL/GenBank/DDBJ databases">
        <title>Complete sequence of chromosome 1 of Shewanella sp. MR-7.</title>
        <authorList>
            <person name="Copeland A."/>
            <person name="Lucas S."/>
            <person name="Lapidus A."/>
            <person name="Barry K."/>
            <person name="Detter J.C."/>
            <person name="Glavina del Rio T."/>
            <person name="Hammon N."/>
            <person name="Israni S."/>
            <person name="Dalin E."/>
            <person name="Tice H."/>
            <person name="Pitluck S."/>
            <person name="Kiss H."/>
            <person name="Brettin T."/>
            <person name="Bruce D."/>
            <person name="Han C."/>
            <person name="Tapia R."/>
            <person name="Gilna P."/>
            <person name="Schmutz J."/>
            <person name="Larimer F."/>
            <person name="Land M."/>
            <person name="Hauser L."/>
            <person name="Kyrpides N."/>
            <person name="Mikhailova N."/>
            <person name="Nealson K."/>
            <person name="Konstantinidis K."/>
            <person name="Klappenbach J."/>
            <person name="Tiedje J."/>
            <person name="Richardson P."/>
        </authorList>
    </citation>
    <scope>NUCLEOTIDE SEQUENCE [LARGE SCALE GENOMIC DNA]</scope>
    <source>
        <strain>MR-7</strain>
    </source>
</reference>
<feature type="chain" id="PRO_1000063609" description="3-isopropylmalate dehydratase large subunit">
    <location>
        <begin position="1"/>
        <end position="474"/>
    </location>
</feature>
<feature type="binding site" evidence="1">
    <location>
        <position position="355"/>
    </location>
    <ligand>
        <name>[4Fe-4S] cluster</name>
        <dbReference type="ChEBI" id="CHEBI:49883"/>
    </ligand>
</feature>
<feature type="binding site" evidence="1">
    <location>
        <position position="415"/>
    </location>
    <ligand>
        <name>[4Fe-4S] cluster</name>
        <dbReference type="ChEBI" id="CHEBI:49883"/>
    </ligand>
</feature>
<feature type="binding site" evidence="1">
    <location>
        <position position="418"/>
    </location>
    <ligand>
        <name>[4Fe-4S] cluster</name>
        <dbReference type="ChEBI" id="CHEBI:49883"/>
    </ligand>
</feature>
<dbReference type="EC" id="4.2.1.33" evidence="1"/>
<dbReference type="EMBL" id="CP000444">
    <property type="protein sequence ID" value="ABI41373.1"/>
    <property type="molecule type" value="Genomic_DNA"/>
</dbReference>
<dbReference type="SMR" id="Q0HZT2"/>
<dbReference type="KEGG" id="shm:Shewmr7_0370"/>
<dbReference type="HOGENOM" id="CLU_006714_3_4_6"/>
<dbReference type="UniPathway" id="UPA00048">
    <property type="reaction ID" value="UER00071"/>
</dbReference>
<dbReference type="GO" id="GO:0003861">
    <property type="term" value="F:3-isopropylmalate dehydratase activity"/>
    <property type="evidence" value="ECO:0007669"/>
    <property type="project" value="UniProtKB-UniRule"/>
</dbReference>
<dbReference type="GO" id="GO:0051539">
    <property type="term" value="F:4 iron, 4 sulfur cluster binding"/>
    <property type="evidence" value="ECO:0007669"/>
    <property type="project" value="UniProtKB-KW"/>
</dbReference>
<dbReference type="GO" id="GO:0046872">
    <property type="term" value="F:metal ion binding"/>
    <property type="evidence" value="ECO:0007669"/>
    <property type="project" value="UniProtKB-KW"/>
</dbReference>
<dbReference type="GO" id="GO:0009098">
    <property type="term" value="P:L-leucine biosynthetic process"/>
    <property type="evidence" value="ECO:0007669"/>
    <property type="project" value="UniProtKB-UniRule"/>
</dbReference>
<dbReference type="CDD" id="cd01583">
    <property type="entry name" value="IPMI"/>
    <property type="match status" value="1"/>
</dbReference>
<dbReference type="FunFam" id="3.30.499.10:FF:000006">
    <property type="entry name" value="3-isopropylmalate dehydratase large subunit"/>
    <property type="match status" value="1"/>
</dbReference>
<dbReference type="FunFam" id="3.30.499.10:FF:000007">
    <property type="entry name" value="3-isopropylmalate dehydratase large subunit"/>
    <property type="match status" value="1"/>
</dbReference>
<dbReference type="Gene3D" id="3.30.499.10">
    <property type="entry name" value="Aconitase, domain 3"/>
    <property type="match status" value="2"/>
</dbReference>
<dbReference type="HAMAP" id="MF_01026">
    <property type="entry name" value="LeuC_type1"/>
    <property type="match status" value="1"/>
</dbReference>
<dbReference type="InterPro" id="IPR004430">
    <property type="entry name" value="3-IsopropMal_deHydase_lsu"/>
</dbReference>
<dbReference type="InterPro" id="IPR015931">
    <property type="entry name" value="Acnase/IPM_dHydase_lsu_aba_1/3"/>
</dbReference>
<dbReference type="InterPro" id="IPR001030">
    <property type="entry name" value="Acoase/IPM_deHydtase_lsu_aba"/>
</dbReference>
<dbReference type="InterPro" id="IPR018136">
    <property type="entry name" value="Aconitase_4Fe-4S_BS"/>
</dbReference>
<dbReference type="InterPro" id="IPR036008">
    <property type="entry name" value="Aconitase_4Fe-4S_dom"/>
</dbReference>
<dbReference type="InterPro" id="IPR050067">
    <property type="entry name" value="IPM_dehydratase_rel_enz"/>
</dbReference>
<dbReference type="InterPro" id="IPR033941">
    <property type="entry name" value="IPMI_cat"/>
</dbReference>
<dbReference type="NCBIfam" id="TIGR00170">
    <property type="entry name" value="leuC"/>
    <property type="match status" value="1"/>
</dbReference>
<dbReference type="NCBIfam" id="NF004016">
    <property type="entry name" value="PRK05478.1"/>
    <property type="match status" value="1"/>
</dbReference>
<dbReference type="NCBIfam" id="NF009116">
    <property type="entry name" value="PRK12466.1"/>
    <property type="match status" value="1"/>
</dbReference>
<dbReference type="PANTHER" id="PTHR43822:SF9">
    <property type="entry name" value="3-ISOPROPYLMALATE DEHYDRATASE"/>
    <property type="match status" value="1"/>
</dbReference>
<dbReference type="PANTHER" id="PTHR43822">
    <property type="entry name" value="HOMOACONITASE, MITOCHONDRIAL-RELATED"/>
    <property type="match status" value="1"/>
</dbReference>
<dbReference type="Pfam" id="PF00330">
    <property type="entry name" value="Aconitase"/>
    <property type="match status" value="1"/>
</dbReference>
<dbReference type="PRINTS" id="PR00415">
    <property type="entry name" value="ACONITASE"/>
</dbReference>
<dbReference type="SUPFAM" id="SSF53732">
    <property type="entry name" value="Aconitase iron-sulfur domain"/>
    <property type="match status" value="1"/>
</dbReference>
<dbReference type="PROSITE" id="PS00450">
    <property type="entry name" value="ACONITASE_1"/>
    <property type="match status" value="1"/>
</dbReference>
<dbReference type="PROSITE" id="PS01244">
    <property type="entry name" value="ACONITASE_2"/>
    <property type="match status" value="1"/>
</dbReference>
<organism>
    <name type="scientific">Shewanella sp. (strain MR-7)</name>
    <dbReference type="NCBI Taxonomy" id="60481"/>
    <lineage>
        <taxon>Bacteria</taxon>
        <taxon>Pseudomonadati</taxon>
        <taxon>Pseudomonadota</taxon>
        <taxon>Gammaproteobacteria</taxon>
        <taxon>Alteromonadales</taxon>
        <taxon>Shewanellaceae</taxon>
        <taxon>Shewanella</taxon>
    </lineage>
</organism>
<sequence>MTTPSTSTTPKTLYQKVWDAHVVATPEGEAPIIYVDRHLVHEVTSPQAFSGLKVAGRKLRAPEKTFATMDHNTSTRSASLDALSPMARTQVETLAQNCKDFGVRLYDIHHPNQGIVHVMGPELGITLPGTVIVCGDSHTATHGAFGALAFGIGTSEVEHVLATQTLRQLKAKTMKIEVRGQVTDGVTAKDIVLAIIGKIGMDGGTGYVVEFCGEAIEALSMEGRMTVCNMAIEMGAKAGMVAPDQTTFDYLEGREFAPKGEDWAEAVAAWKALKTDVGAEFDATVVLDAADIAPQLTWGTNPGQVVAIDAPVPNPADEANPTIRASMEKALDYIGLTAGTPMTDVAINKVFIGSCTNSRIEDLRSAAKQAKGRKVASGVTAIVVPGSGQVKAQAEAEGLDKIFIEAGFEWRLPGCSMCLAMNDDRLEAGDRCASTSNRNFEGRQGRGSRTHLVSPAMAAAAAIAGHFVDIRKPY</sequence>
<evidence type="ECO:0000255" key="1">
    <source>
        <dbReference type="HAMAP-Rule" id="MF_01026"/>
    </source>
</evidence>